<reference key="1">
    <citation type="journal article" date="2009" name="Appl. Environ. Microbiol.">
        <title>Metabolic versatility and indigenous origin of the archaeon Thermococcus sibiricus, isolated from a siberian oil reservoir, as revealed by genome analysis.</title>
        <authorList>
            <person name="Mardanov A.V."/>
            <person name="Ravin N.V."/>
            <person name="Svetlitchnyi V.A."/>
            <person name="Beletsky A.V."/>
            <person name="Miroshnichenko M.L."/>
            <person name="Bonch-Osmolovskaya E.A."/>
            <person name="Skryabin K.G."/>
        </authorList>
    </citation>
    <scope>NUCLEOTIDE SEQUENCE [LARGE SCALE GENOMIC DNA]</scope>
    <source>
        <strain>DSM 12597 / MM 739</strain>
    </source>
</reference>
<sequence length="76" mass="8465">MAERPLDVIHKSLDKEVLVILKRGAEYRGKLIGYDIHLNVVLADAQLIENGEPKKSYGKIVIRGDNVLAISPVEIE</sequence>
<accession>C6A1T2</accession>
<organism>
    <name type="scientific">Thermococcus sibiricus (strain DSM 12597 / MM 739)</name>
    <dbReference type="NCBI Taxonomy" id="604354"/>
    <lineage>
        <taxon>Archaea</taxon>
        <taxon>Methanobacteriati</taxon>
        <taxon>Methanobacteriota</taxon>
        <taxon>Thermococci</taxon>
        <taxon>Thermococcales</taxon>
        <taxon>Thermococcaceae</taxon>
        <taxon>Thermococcus</taxon>
    </lineage>
</organism>
<name>RUXX_THESM</name>
<proteinExistence type="inferred from homology"/>
<protein>
    <recommendedName>
        <fullName evidence="1">Putative snRNP Sm-like protein</fullName>
    </recommendedName>
</protein>
<feature type="chain" id="PRO_1000204622" description="Putative snRNP Sm-like protein">
    <location>
        <begin position="1"/>
        <end position="76"/>
    </location>
</feature>
<feature type="domain" description="Sm" evidence="2">
    <location>
        <begin position="4"/>
        <end position="76"/>
    </location>
</feature>
<gene>
    <name type="ordered locus">TSIB_0511</name>
</gene>
<keyword id="KW-1185">Reference proteome</keyword>
<keyword id="KW-0687">Ribonucleoprotein</keyword>
<evidence type="ECO:0000255" key="1">
    <source>
        <dbReference type="HAMAP-Rule" id="MF_00257"/>
    </source>
</evidence>
<evidence type="ECO:0000255" key="2">
    <source>
        <dbReference type="PROSITE-ProRule" id="PRU01346"/>
    </source>
</evidence>
<dbReference type="EMBL" id="CP001463">
    <property type="protein sequence ID" value="ACS89577.1"/>
    <property type="molecule type" value="Genomic_DNA"/>
</dbReference>
<dbReference type="RefSeq" id="WP_015848797.1">
    <property type="nucleotide sequence ID" value="NC_012883.1"/>
</dbReference>
<dbReference type="SMR" id="C6A1T2"/>
<dbReference type="STRING" id="604354.TSIB_0511"/>
<dbReference type="GeneID" id="8095498"/>
<dbReference type="KEGG" id="tsi:TSIB_0511"/>
<dbReference type="eggNOG" id="arCOG00998">
    <property type="taxonomic scope" value="Archaea"/>
</dbReference>
<dbReference type="HOGENOM" id="CLU_076902_11_1_2"/>
<dbReference type="OrthoDB" id="371816at2157"/>
<dbReference type="Proteomes" id="UP000009079">
    <property type="component" value="Chromosome"/>
</dbReference>
<dbReference type="GO" id="GO:1990904">
    <property type="term" value="C:ribonucleoprotein complex"/>
    <property type="evidence" value="ECO:0007669"/>
    <property type="project" value="UniProtKB-KW"/>
</dbReference>
<dbReference type="GO" id="GO:0120114">
    <property type="term" value="C:Sm-like protein family complex"/>
    <property type="evidence" value="ECO:0007669"/>
    <property type="project" value="UniProtKB-ARBA"/>
</dbReference>
<dbReference type="GO" id="GO:0003723">
    <property type="term" value="F:RNA binding"/>
    <property type="evidence" value="ECO:0007669"/>
    <property type="project" value="InterPro"/>
</dbReference>
<dbReference type="GO" id="GO:0000398">
    <property type="term" value="P:mRNA splicing, via spliceosome"/>
    <property type="evidence" value="ECO:0007669"/>
    <property type="project" value="InterPro"/>
</dbReference>
<dbReference type="CDD" id="cd01731">
    <property type="entry name" value="archaeal_Sm1"/>
    <property type="match status" value="1"/>
</dbReference>
<dbReference type="Gene3D" id="2.30.30.100">
    <property type="match status" value="1"/>
</dbReference>
<dbReference type="HAMAP" id="MF_00257">
    <property type="entry name" value="Lsm_RuxX"/>
    <property type="match status" value="1"/>
</dbReference>
<dbReference type="InterPro" id="IPR016487">
    <property type="entry name" value="Lsm6/sSmF"/>
</dbReference>
<dbReference type="InterPro" id="IPR010920">
    <property type="entry name" value="LSM_dom_sf"/>
</dbReference>
<dbReference type="InterPro" id="IPR047575">
    <property type="entry name" value="Sm"/>
</dbReference>
<dbReference type="InterPro" id="IPR001163">
    <property type="entry name" value="Sm_dom_euk/arc"/>
</dbReference>
<dbReference type="InterPro" id="IPR022901">
    <property type="entry name" value="snRNP_Sm-like_arc"/>
</dbReference>
<dbReference type="NCBIfam" id="NF001963">
    <property type="entry name" value="PRK00737.1"/>
    <property type="match status" value="1"/>
</dbReference>
<dbReference type="PANTHER" id="PTHR11021:SF0">
    <property type="entry name" value="SMALL NUCLEAR RIBONUCLEOPROTEIN F"/>
    <property type="match status" value="1"/>
</dbReference>
<dbReference type="PANTHER" id="PTHR11021">
    <property type="entry name" value="SMALL NUCLEAR RIBONUCLEOPROTEIN F SNRNP-F"/>
    <property type="match status" value="1"/>
</dbReference>
<dbReference type="Pfam" id="PF01423">
    <property type="entry name" value="LSM"/>
    <property type="match status" value="1"/>
</dbReference>
<dbReference type="SMART" id="SM00651">
    <property type="entry name" value="Sm"/>
    <property type="match status" value="1"/>
</dbReference>
<dbReference type="SUPFAM" id="SSF50182">
    <property type="entry name" value="Sm-like ribonucleoproteins"/>
    <property type="match status" value="1"/>
</dbReference>
<dbReference type="PROSITE" id="PS52002">
    <property type="entry name" value="SM"/>
    <property type="match status" value="1"/>
</dbReference>
<comment type="similarity">
    <text evidence="1">Belongs to the snRNP Sm proteins family.</text>
</comment>